<gene>
    <name type="primary">ORC4</name>
    <name type="ordered locus">YPR162C</name>
    <name type="ORF">P9325.5</name>
</gene>
<comment type="function">
    <text>Component of the origin recognition complex (ORC) that binds origins of replication. It has a role in both chromosomal replication and mating type transcriptional silencing. Binds to the ARS consensus sequence (ACS) of origins of replication.</text>
</comment>
<comment type="subunit">
    <text>Component of the origin recognition complex (ORC) composed of at least ORC1, ORC2, ORC3, ORC4, ORC5 and ORC6.</text>
</comment>
<comment type="interaction">
    <interactant intactId="EBI-12580">
        <id>P54791</id>
    </interactant>
    <interactant intactId="EBI-12568">
        <id>P54784</id>
        <label>ORC1</label>
    </interactant>
    <organismsDiffer>false</organismsDiffer>
    <experiments>7</experiments>
</comment>
<comment type="interaction">
    <interactant intactId="EBI-12580">
        <id>P54791</id>
    </interactant>
    <interactant intactId="EBI-12576">
        <id>P54790</id>
        <label>ORC3</label>
    </interactant>
    <organismsDiffer>false</organismsDiffer>
    <experiments>4</experiments>
</comment>
<comment type="interaction">
    <interactant intactId="EBI-12580">
        <id>P54791</id>
    </interactant>
    <interactant intactId="EBI-12584">
        <id>P50874</id>
        <label>ORC5</label>
    </interactant>
    <organismsDiffer>false</organismsDiffer>
    <experiments>10</experiments>
</comment>
<comment type="subcellular location">
    <subcellularLocation>
        <location>Nucleus</location>
    </subcellularLocation>
</comment>
<comment type="miscellaneous">
    <text evidence="1">Present with 2170 molecules/cell in log phase SD medium.</text>
</comment>
<comment type="similarity">
    <text evidence="2">Belongs to the ORC4 family.</text>
</comment>
<feature type="chain" id="PRO_0000127091" description="Origin recognition complex subunit 4">
    <location>
        <begin position="1"/>
        <end position="529"/>
    </location>
</feature>
<feature type="modified residue" description="Phosphoserine" evidence="3">
    <location>
        <position position="9"/>
    </location>
</feature>
<feature type="helix" evidence="5">
    <location>
        <begin position="47"/>
        <end position="61"/>
    </location>
</feature>
<feature type="helix" evidence="5">
    <location>
        <begin position="66"/>
        <end position="68"/>
    </location>
</feature>
<feature type="helix" evidence="5">
    <location>
        <begin position="73"/>
        <end position="75"/>
    </location>
</feature>
<feature type="helix" evidence="5">
    <location>
        <begin position="76"/>
        <end position="89"/>
    </location>
</feature>
<feature type="turn" evidence="6">
    <location>
        <begin position="90"/>
        <end position="92"/>
    </location>
</feature>
<feature type="strand" evidence="5">
    <location>
        <begin position="96"/>
        <end position="101"/>
    </location>
</feature>
<feature type="helix" evidence="5">
    <location>
        <begin position="108"/>
        <end position="120"/>
    </location>
</feature>
<feature type="strand" evidence="5">
    <location>
        <begin position="124"/>
        <end position="133"/>
    </location>
</feature>
<feature type="turn" evidence="5">
    <location>
        <begin position="134"/>
        <end position="136"/>
    </location>
</feature>
<feature type="helix" evidence="5">
    <location>
        <begin position="141"/>
        <end position="157"/>
    </location>
</feature>
<feature type="helix" evidence="5">
    <location>
        <begin position="177"/>
        <end position="188"/>
    </location>
</feature>
<feature type="strand" evidence="5">
    <location>
        <begin position="211"/>
        <end position="217"/>
    </location>
</feature>
<feature type="helix" evidence="5">
    <location>
        <begin position="219"/>
        <end position="222"/>
    </location>
</feature>
<feature type="strand" evidence="4">
    <location>
        <begin position="223"/>
        <end position="226"/>
    </location>
</feature>
<feature type="helix" evidence="5">
    <location>
        <begin position="229"/>
        <end position="239"/>
    </location>
</feature>
<feature type="strand" evidence="5">
    <location>
        <begin position="245"/>
        <end position="252"/>
    </location>
</feature>
<feature type="helix" evidence="5">
    <location>
        <begin position="256"/>
        <end position="258"/>
    </location>
</feature>
<feature type="helix" evidence="5">
    <location>
        <begin position="262"/>
        <end position="267"/>
    </location>
</feature>
<feature type="strand" evidence="5">
    <location>
        <begin position="272"/>
        <end position="274"/>
    </location>
</feature>
<feature type="helix" evidence="5">
    <location>
        <begin position="281"/>
        <end position="292"/>
    </location>
</feature>
<feature type="helix" evidence="5">
    <location>
        <begin position="302"/>
        <end position="314"/>
    </location>
</feature>
<feature type="helix" evidence="5">
    <location>
        <begin position="319"/>
        <end position="330"/>
    </location>
</feature>
<feature type="helix" evidence="5">
    <location>
        <begin position="334"/>
        <end position="346"/>
    </location>
</feature>
<feature type="helix" evidence="5">
    <location>
        <begin position="351"/>
        <end position="360"/>
    </location>
</feature>
<feature type="helix" evidence="5">
    <location>
        <begin position="362"/>
        <end position="371"/>
    </location>
</feature>
<feature type="turn" evidence="5">
    <location>
        <begin position="372"/>
        <end position="374"/>
    </location>
</feature>
<feature type="helix" evidence="5">
    <location>
        <begin position="376"/>
        <end position="380"/>
    </location>
</feature>
<feature type="helix" evidence="5">
    <location>
        <begin position="385"/>
        <end position="400"/>
    </location>
</feature>
<feature type="strand" evidence="5">
    <location>
        <begin position="401"/>
        <end position="404"/>
    </location>
</feature>
<feature type="helix" evidence="5">
    <location>
        <begin position="408"/>
        <end position="423"/>
    </location>
</feature>
<feature type="helix" evidence="5">
    <location>
        <begin position="453"/>
        <end position="465"/>
    </location>
</feature>
<feature type="strand" evidence="5">
    <location>
        <begin position="468"/>
        <end position="471"/>
    </location>
</feature>
<feature type="strand" evidence="6">
    <location>
        <begin position="477"/>
        <end position="480"/>
    </location>
</feature>
<feature type="helix" evidence="5">
    <location>
        <begin position="481"/>
        <end position="488"/>
    </location>
</feature>
<feature type="helix" evidence="5">
    <location>
        <begin position="493"/>
        <end position="495"/>
    </location>
</feature>
<feature type="helix" evidence="5">
    <location>
        <begin position="499"/>
        <end position="501"/>
    </location>
</feature>
<feature type="strand" evidence="5">
    <location>
        <begin position="504"/>
        <end position="508"/>
    </location>
</feature>
<feature type="helix" evidence="5">
    <location>
        <begin position="510"/>
        <end position="516"/>
    </location>
</feature>
<feature type="helix" evidence="5">
    <location>
        <begin position="524"/>
        <end position="527"/>
    </location>
</feature>
<evidence type="ECO:0000269" key="1">
    <source>
    </source>
</evidence>
<evidence type="ECO:0000305" key="2"/>
<evidence type="ECO:0007744" key="3">
    <source>
    </source>
</evidence>
<evidence type="ECO:0007829" key="4">
    <source>
        <dbReference type="PDB" id="7TJF"/>
    </source>
</evidence>
<evidence type="ECO:0007829" key="5">
    <source>
        <dbReference type="PDB" id="7TJH"/>
    </source>
</evidence>
<evidence type="ECO:0007829" key="6">
    <source>
        <dbReference type="PDB" id="7TJK"/>
    </source>
</evidence>
<organism>
    <name type="scientific">Saccharomyces cerevisiae (strain ATCC 204508 / S288c)</name>
    <name type="common">Baker's yeast</name>
    <dbReference type="NCBI Taxonomy" id="559292"/>
    <lineage>
        <taxon>Eukaryota</taxon>
        <taxon>Fungi</taxon>
        <taxon>Dikarya</taxon>
        <taxon>Ascomycota</taxon>
        <taxon>Saccharomycotina</taxon>
        <taxon>Saccharomycetes</taxon>
        <taxon>Saccharomycetales</taxon>
        <taxon>Saccharomycetaceae</taxon>
        <taxon>Saccharomyces</taxon>
    </lineage>
</organism>
<sequence length="529" mass="60705">MTISEARLSPQVNLLPIKRHSNEEVEETAAILKKRTIDNEKCKDSDPGFGSLQRRLLQQLYGTLPTDEKIIFTYLQDCQQEIDRIIKQSIIQKESHSVILVGPRQSYKTYLLDYELSLLQQSYKEQFITIRLNGFIHSEQTAINGIATQLEQQLQKIHGSEEKIDDTSLETISSGSLTEVFEKILLLLDSTTKTRNEDSGEVDRESITKITVVFIFDEIDTFAGPVRQTLLYNLFDMVEHSRVPVCIFGCTTKLNILEYLEKRVKSRFSQRVIYMPQIQNLDDMVDAVRNLLTVRSEISPWVSQWNETLEKELSDPRSNLNRHIRMNFETFRSLPTLKNSIIPLVATSKNFGSLCTAIKSCSFLDIYNKNQLSNNLTGRLQSLSDLELAILISAARVALRAKDGSFNFNLAYAEYEKMIKAINSRIPTVAPTTNVGTGQSTFSIDNTIKLWLKKDVKNVWENLVQLDFFTEKSAVGLRDNATAAFYASNYQFQGTMIPFDLRSYQMQIILQELRRIIPKSNMYYSWTQL</sequence>
<name>ORC4_YEAST</name>
<accession>P54791</accession>
<accession>D6W4G3</accession>
<reference key="1">
    <citation type="journal article" date="1995" name="Cell">
        <title>The multidomain structure of Orc1p reveals similarity to regulators of DNA replication and transcriptional silencing.</title>
        <authorList>
            <person name="Bell S.P."/>
            <person name="Mitchell J."/>
            <person name="Leber J."/>
            <person name="Kobayashi R."/>
            <person name="Stillman B."/>
        </authorList>
    </citation>
    <scope>NUCLEOTIDE SEQUENCE [GENOMIC DNA]</scope>
    <scope>PARTIAL PROTEIN SEQUENCE</scope>
</reference>
<reference key="2">
    <citation type="journal article" date="1997" name="Nature">
        <title>The nucleotide sequence of Saccharomyces cerevisiae chromosome XVI.</title>
        <authorList>
            <person name="Bussey H."/>
            <person name="Storms R.K."/>
            <person name="Ahmed A."/>
            <person name="Albermann K."/>
            <person name="Allen E."/>
            <person name="Ansorge W."/>
            <person name="Araujo R."/>
            <person name="Aparicio A."/>
            <person name="Barrell B.G."/>
            <person name="Badcock K."/>
            <person name="Benes V."/>
            <person name="Botstein D."/>
            <person name="Bowman S."/>
            <person name="Brueckner M."/>
            <person name="Carpenter J."/>
            <person name="Cherry J.M."/>
            <person name="Chung E."/>
            <person name="Churcher C.M."/>
            <person name="Coster F."/>
            <person name="Davis K."/>
            <person name="Davis R.W."/>
            <person name="Dietrich F.S."/>
            <person name="Delius H."/>
            <person name="DiPaolo T."/>
            <person name="Dubois E."/>
            <person name="Duesterhoeft A."/>
            <person name="Duncan M."/>
            <person name="Floeth M."/>
            <person name="Fortin N."/>
            <person name="Friesen J.D."/>
            <person name="Fritz C."/>
            <person name="Goffeau A."/>
            <person name="Hall J."/>
            <person name="Hebling U."/>
            <person name="Heumann K."/>
            <person name="Hilbert H."/>
            <person name="Hillier L.W."/>
            <person name="Hunicke-Smith S."/>
            <person name="Hyman R.W."/>
            <person name="Johnston M."/>
            <person name="Kalman S."/>
            <person name="Kleine K."/>
            <person name="Komp C."/>
            <person name="Kurdi O."/>
            <person name="Lashkari D."/>
            <person name="Lew H."/>
            <person name="Lin A."/>
            <person name="Lin D."/>
            <person name="Louis E.J."/>
            <person name="Marathe R."/>
            <person name="Messenguy F."/>
            <person name="Mewes H.-W."/>
            <person name="Mirtipati S."/>
            <person name="Moestl D."/>
            <person name="Mueller-Auer S."/>
            <person name="Namath A."/>
            <person name="Nentwich U."/>
            <person name="Oefner P."/>
            <person name="Pearson D."/>
            <person name="Petel F.X."/>
            <person name="Pohl T.M."/>
            <person name="Purnelle B."/>
            <person name="Rajandream M.A."/>
            <person name="Rechmann S."/>
            <person name="Rieger M."/>
            <person name="Riles L."/>
            <person name="Roberts D."/>
            <person name="Schaefer M."/>
            <person name="Scharfe M."/>
            <person name="Scherens B."/>
            <person name="Schramm S."/>
            <person name="Schroeder M."/>
            <person name="Sdicu A.-M."/>
            <person name="Tettelin H."/>
            <person name="Urrestarazu L.A."/>
            <person name="Ushinsky S."/>
            <person name="Vierendeels F."/>
            <person name="Vissers S."/>
            <person name="Voss H."/>
            <person name="Walsh S.V."/>
            <person name="Wambutt R."/>
            <person name="Wang Y."/>
            <person name="Wedler E."/>
            <person name="Wedler H."/>
            <person name="Winnett E."/>
            <person name="Zhong W.-W."/>
            <person name="Zollner A."/>
            <person name="Vo D.H."/>
            <person name="Hani J."/>
        </authorList>
    </citation>
    <scope>NUCLEOTIDE SEQUENCE [LARGE SCALE GENOMIC DNA]</scope>
    <source>
        <strain>ATCC 204508 / S288c</strain>
    </source>
</reference>
<reference key="3">
    <citation type="journal article" date="2014" name="G3 (Bethesda)">
        <title>The reference genome sequence of Saccharomyces cerevisiae: Then and now.</title>
        <authorList>
            <person name="Engel S.R."/>
            <person name="Dietrich F.S."/>
            <person name="Fisk D.G."/>
            <person name="Binkley G."/>
            <person name="Balakrishnan R."/>
            <person name="Costanzo M.C."/>
            <person name="Dwight S.S."/>
            <person name="Hitz B.C."/>
            <person name="Karra K."/>
            <person name="Nash R.S."/>
            <person name="Weng S."/>
            <person name="Wong E.D."/>
            <person name="Lloyd P."/>
            <person name="Skrzypek M.S."/>
            <person name="Miyasato S.R."/>
            <person name="Simison M."/>
            <person name="Cherry J.M."/>
        </authorList>
    </citation>
    <scope>GENOME REANNOTATION</scope>
    <source>
        <strain>ATCC 204508 / S288c</strain>
    </source>
</reference>
<reference key="4">
    <citation type="journal article" date="2007" name="Genome Res.">
        <title>Approaching a complete repository of sequence-verified protein-encoding clones for Saccharomyces cerevisiae.</title>
        <authorList>
            <person name="Hu Y."/>
            <person name="Rolfs A."/>
            <person name="Bhullar B."/>
            <person name="Murthy T.V.S."/>
            <person name="Zhu C."/>
            <person name="Berger M.F."/>
            <person name="Camargo A.A."/>
            <person name="Kelley F."/>
            <person name="McCarron S."/>
            <person name="Jepson D."/>
            <person name="Richardson A."/>
            <person name="Raphael J."/>
            <person name="Moreira D."/>
            <person name="Taycher E."/>
            <person name="Zuo D."/>
            <person name="Mohr S."/>
            <person name="Kane M.F."/>
            <person name="Williamson J."/>
            <person name="Simpson A.J.G."/>
            <person name="Bulyk M.L."/>
            <person name="Harlow E."/>
            <person name="Marsischky G."/>
            <person name="Kolodner R.D."/>
            <person name="LaBaer J."/>
        </authorList>
    </citation>
    <scope>NUCLEOTIDE SEQUENCE [GENOMIC DNA]</scope>
    <source>
        <strain>ATCC 204508 / S288c</strain>
    </source>
</reference>
<reference key="5">
    <citation type="journal article" date="2003" name="Nature">
        <title>Global analysis of protein expression in yeast.</title>
        <authorList>
            <person name="Ghaemmaghami S."/>
            <person name="Huh W.-K."/>
            <person name="Bower K."/>
            <person name="Howson R.W."/>
            <person name="Belle A."/>
            <person name="Dephoure N."/>
            <person name="O'Shea E.K."/>
            <person name="Weissman J.S."/>
        </authorList>
    </citation>
    <scope>LEVEL OF PROTEIN EXPRESSION [LARGE SCALE ANALYSIS]</scope>
</reference>
<reference key="6">
    <citation type="journal article" date="2008" name="Mol. Cell. Proteomics">
        <title>A multidimensional chromatography technology for in-depth phosphoproteome analysis.</title>
        <authorList>
            <person name="Albuquerque C.P."/>
            <person name="Smolka M.B."/>
            <person name="Payne S.H."/>
            <person name="Bafna V."/>
            <person name="Eng J."/>
            <person name="Zhou H."/>
        </authorList>
    </citation>
    <scope>PHOSPHORYLATION [LARGE SCALE ANALYSIS] AT SER-9</scope>
    <scope>IDENTIFICATION BY MASS SPECTROMETRY [LARGE SCALE ANALYSIS]</scope>
</reference>
<keyword id="KW-0002">3D-structure</keyword>
<keyword id="KW-0903">Direct protein sequencing</keyword>
<keyword id="KW-0235">DNA replication</keyword>
<keyword id="KW-0238">DNA-binding</keyword>
<keyword id="KW-0539">Nucleus</keyword>
<keyword id="KW-0597">Phosphoprotein</keyword>
<keyword id="KW-1185">Reference proteome</keyword>
<protein>
    <recommendedName>
        <fullName>Origin recognition complex subunit 4</fullName>
    </recommendedName>
    <alternativeName>
        <fullName>Origin recognition complex 56 kDa subunit</fullName>
    </alternativeName>
</protein>
<proteinExistence type="evidence at protein level"/>
<dbReference type="EMBL" id="U34862">
    <property type="protein sequence ID" value="AAB38250.1"/>
    <property type="molecule type" value="Genomic_DNA"/>
</dbReference>
<dbReference type="EMBL" id="U25840">
    <property type="protein sequence ID" value="AAB68149.1"/>
    <property type="molecule type" value="Genomic_DNA"/>
</dbReference>
<dbReference type="EMBL" id="AY723871">
    <property type="protein sequence ID" value="AAU09788.1"/>
    <property type="molecule type" value="Genomic_DNA"/>
</dbReference>
<dbReference type="EMBL" id="BK006949">
    <property type="protein sequence ID" value="DAA11579.1"/>
    <property type="molecule type" value="Genomic_DNA"/>
</dbReference>
<dbReference type="PIR" id="S59821">
    <property type="entry name" value="S59821"/>
</dbReference>
<dbReference type="RefSeq" id="NP_015488.1">
    <property type="nucleotide sequence ID" value="NM_001184259.1"/>
</dbReference>
<dbReference type="PDB" id="5V8F">
    <property type="method" value="EM"/>
    <property type="resolution" value="3.90 A"/>
    <property type="chains" value="D=1-529"/>
</dbReference>
<dbReference type="PDB" id="5ZR1">
    <property type="method" value="EM"/>
    <property type="resolution" value="3.00 A"/>
    <property type="chains" value="D=1-529"/>
</dbReference>
<dbReference type="PDB" id="6RQC">
    <property type="method" value="EM"/>
    <property type="resolution" value="4.40 A"/>
    <property type="chains" value="D=1-529"/>
</dbReference>
<dbReference type="PDB" id="6WGC">
    <property type="method" value="EM"/>
    <property type="resolution" value="4.30 A"/>
    <property type="chains" value="D=1-529"/>
</dbReference>
<dbReference type="PDB" id="6WGG">
    <property type="method" value="EM"/>
    <property type="resolution" value="8.10 A"/>
    <property type="chains" value="D=1-529"/>
</dbReference>
<dbReference type="PDB" id="6WGI">
    <property type="method" value="EM"/>
    <property type="resolution" value="10.00 A"/>
    <property type="chains" value="D=1-529"/>
</dbReference>
<dbReference type="PDB" id="7MCA">
    <property type="method" value="EM"/>
    <property type="resolution" value="3.60 A"/>
    <property type="chains" value="D=1-529"/>
</dbReference>
<dbReference type="PDB" id="7TJF">
    <property type="method" value="EM"/>
    <property type="resolution" value="2.60 A"/>
    <property type="chains" value="D=1-529"/>
</dbReference>
<dbReference type="PDB" id="7TJH">
    <property type="method" value="EM"/>
    <property type="resolution" value="2.50 A"/>
    <property type="chains" value="D=1-529"/>
</dbReference>
<dbReference type="PDB" id="7TJI">
    <property type="method" value="EM"/>
    <property type="resolution" value="2.70 A"/>
    <property type="chains" value="D=1-529"/>
</dbReference>
<dbReference type="PDB" id="7TJJ">
    <property type="method" value="EM"/>
    <property type="resolution" value="2.70 A"/>
    <property type="chains" value="D=1-529"/>
</dbReference>
<dbReference type="PDB" id="7TJK">
    <property type="method" value="EM"/>
    <property type="resolution" value="2.70 A"/>
    <property type="chains" value="D=1-529"/>
</dbReference>
<dbReference type="PDB" id="9BCX">
    <property type="method" value="EM"/>
    <property type="resolution" value="6.10 A"/>
    <property type="chains" value="E=1-529"/>
</dbReference>
<dbReference type="PDB" id="9GJP">
    <property type="method" value="EM"/>
    <property type="resolution" value="3.40 A"/>
    <property type="chains" value="D=1-529"/>
</dbReference>
<dbReference type="PDB" id="9GJW">
    <property type="method" value="EM"/>
    <property type="resolution" value="3.30 A"/>
    <property type="chains" value="D=1-529"/>
</dbReference>
<dbReference type="PDB" id="9GM5">
    <property type="method" value="EM"/>
    <property type="resolution" value="3.70 A"/>
    <property type="chains" value="D=1-529"/>
</dbReference>
<dbReference type="PDBsum" id="5V8F"/>
<dbReference type="PDBsum" id="5ZR1"/>
<dbReference type="PDBsum" id="6RQC"/>
<dbReference type="PDBsum" id="6WGC"/>
<dbReference type="PDBsum" id="6WGG"/>
<dbReference type="PDBsum" id="6WGI"/>
<dbReference type="PDBsum" id="7MCA"/>
<dbReference type="PDBsum" id="7TJF"/>
<dbReference type="PDBsum" id="7TJH"/>
<dbReference type="PDBsum" id="7TJI"/>
<dbReference type="PDBsum" id="7TJJ"/>
<dbReference type="PDBsum" id="7TJK"/>
<dbReference type="PDBsum" id="9BCX"/>
<dbReference type="PDBsum" id="9GJP"/>
<dbReference type="PDBsum" id="9GJW"/>
<dbReference type="PDBsum" id="9GM5"/>
<dbReference type="EMDB" id="EMD-21662"/>
<dbReference type="EMDB" id="EMD-21665"/>
<dbReference type="EMDB" id="EMD-21666"/>
<dbReference type="EMDB" id="EMD-23755"/>
<dbReference type="EMDB" id="EMD-23818"/>
<dbReference type="EMDB" id="EMD-25924"/>
<dbReference type="EMDB" id="EMD-25925"/>
<dbReference type="EMDB" id="EMD-25926"/>
<dbReference type="EMDB" id="EMD-25927"/>
<dbReference type="EMDB" id="EMD-25928"/>
<dbReference type="EMDB" id="EMD-44441"/>
<dbReference type="EMDB" id="EMD-4980"/>
<dbReference type="EMDB" id="EMD-51401"/>
<dbReference type="EMDB" id="EMD-51407"/>
<dbReference type="EMDB" id="EMD-51441"/>
<dbReference type="EMDB" id="EMD-6941"/>
<dbReference type="EMDB" id="EMD-8540"/>
<dbReference type="SMR" id="P54791"/>
<dbReference type="BioGRID" id="36335">
    <property type="interactions" value="341"/>
</dbReference>
<dbReference type="ComplexPortal" id="CPX-768">
    <property type="entry name" value="Nuclear origin recognition complex"/>
</dbReference>
<dbReference type="DIP" id="DIP-2287N"/>
<dbReference type="FunCoup" id="P54791">
    <property type="interactions" value="935"/>
</dbReference>
<dbReference type="IntAct" id="P54791">
    <property type="interactions" value="19"/>
</dbReference>
<dbReference type="MINT" id="P54791"/>
<dbReference type="STRING" id="4932.YPR162C"/>
<dbReference type="iPTMnet" id="P54791"/>
<dbReference type="PaxDb" id="4932-YPR162C"/>
<dbReference type="PeptideAtlas" id="P54791"/>
<dbReference type="EnsemblFungi" id="YPR162C_mRNA">
    <property type="protein sequence ID" value="YPR162C"/>
    <property type="gene ID" value="YPR162C"/>
</dbReference>
<dbReference type="GeneID" id="856291"/>
<dbReference type="KEGG" id="sce:YPR162C"/>
<dbReference type="AGR" id="SGD:S000006366"/>
<dbReference type="SGD" id="S000006366">
    <property type="gene designation" value="ORC4"/>
</dbReference>
<dbReference type="VEuPathDB" id="FungiDB:YPR162C"/>
<dbReference type="eggNOG" id="KOG2228">
    <property type="taxonomic scope" value="Eukaryota"/>
</dbReference>
<dbReference type="GeneTree" id="ENSGT00390000016542"/>
<dbReference type="HOGENOM" id="CLU_007115_4_0_1"/>
<dbReference type="InParanoid" id="P54791"/>
<dbReference type="OMA" id="QRIIYMP"/>
<dbReference type="OrthoDB" id="343623at2759"/>
<dbReference type="BioCyc" id="YEAST:G3O-34291-MONOMER"/>
<dbReference type="Reactome" id="R-SCE-176187">
    <property type="pathway name" value="Activation of ATR in response to replication stress"/>
</dbReference>
<dbReference type="Reactome" id="R-SCE-68616">
    <property type="pathway name" value="Assembly of the ORC complex at the origin of replication"/>
</dbReference>
<dbReference type="Reactome" id="R-SCE-68689">
    <property type="pathway name" value="CDC6 association with the ORC:origin complex"/>
</dbReference>
<dbReference type="Reactome" id="R-SCE-68962">
    <property type="pathway name" value="Activation of the pre-replicative complex"/>
</dbReference>
<dbReference type="BioGRID-ORCS" id="856291">
    <property type="hits" value="4 hits in 10 CRISPR screens"/>
</dbReference>
<dbReference type="PRO" id="PR:P54791"/>
<dbReference type="Proteomes" id="UP000002311">
    <property type="component" value="Chromosome XVI"/>
</dbReference>
<dbReference type="RNAct" id="P54791">
    <property type="molecule type" value="protein"/>
</dbReference>
<dbReference type="GO" id="GO:0031261">
    <property type="term" value="C:DNA replication preinitiation complex"/>
    <property type="evidence" value="ECO:0000314"/>
    <property type="project" value="SGD"/>
</dbReference>
<dbReference type="GO" id="GO:0005664">
    <property type="term" value="C:nuclear origin of replication recognition complex"/>
    <property type="evidence" value="ECO:0000314"/>
    <property type="project" value="SGD"/>
</dbReference>
<dbReference type="GO" id="GO:0005656">
    <property type="term" value="C:nuclear pre-replicative complex"/>
    <property type="evidence" value="ECO:0000314"/>
    <property type="project" value="SGD"/>
</dbReference>
<dbReference type="GO" id="GO:0005654">
    <property type="term" value="C:nucleoplasm"/>
    <property type="evidence" value="ECO:0000304"/>
    <property type="project" value="Reactome"/>
</dbReference>
<dbReference type="GO" id="GO:0005634">
    <property type="term" value="C:nucleus"/>
    <property type="evidence" value="ECO:0000269"/>
    <property type="project" value="ComplexPortal"/>
</dbReference>
<dbReference type="GO" id="GO:0003688">
    <property type="term" value="F:DNA replication origin binding"/>
    <property type="evidence" value="ECO:0000314"/>
    <property type="project" value="SGD"/>
</dbReference>
<dbReference type="GO" id="GO:0006270">
    <property type="term" value="P:DNA replication initiation"/>
    <property type="evidence" value="ECO:0000315"/>
    <property type="project" value="SGD"/>
</dbReference>
<dbReference type="GO" id="GO:0006267">
    <property type="term" value="P:pre-replicative complex assembly involved in nuclear cell cycle DNA replication"/>
    <property type="evidence" value="ECO:0000314"/>
    <property type="project" value="SGD"/>
</dbReference>
<dbReference type="GO" id="GO:0030466">
    <property type="term" value="P:silent mating-type cassette heterochromatin formation"/>
    <property type="evidence" value="ECO:0000314"/>
    <property type="project" value="SGD"/>
</dbReference>
<dbReference type="FunFam" id="3.40.50.300:FF:001499">
    <property type="entry name" value="Origin recognition complex subunit 4, putative"/>
    <property type="match status" value="1"/>
</dbReference>
<dbReference type="Gene3D" id="3.40.50.300">
    <property type="entry name" value="P-loop containing nucleotide triphosphate hydrolases"/>
    <property type="match status" value="1"/>
</dbReference>
<dbReference type="InterPro" id="IPR016527">
    <property type="entry name" value="ORC4"/>
</dbReference>
<dbReference type="InterPro" id="IPR032705">
    <property type="entry name" value="ORC4_C"/>
</dbReference>
<dbReference type="InterPro" id="IPR027417">
    <property type="entry name" value="P-loop_NTPase"/>
</dbReference>
<dbReference type="PANTHER" id="PTHR12087">
    <property type="entry name" value="ORIGIN RECOGNITION COMPLEX SUBUNIT 4"/>
    <property type="match status" value="1"/>
</dbReference>
<dbReference type="PANTHER" id="PTHR12087:SF0">
    <property type="entry name" value="ORIGIN RECOGNITION COMPLEX SUBUNIT 4"/>
    <property type="match status" value="1"/>
</dbReference>
<dbReference type="Pfam" id="PF14629">
    <property type="entry name" value="ORC4_C"/>
    <property type="match status" value="1"/>
</dbReference>
<dbReference type="PIRSF" id="PIRSF007858">
    <property type="entry name" value="ORC4"/>
    <property type="match status" value="1"/>
</dbReference>
<dbReference type="SUPFAM" id="SSF52540">
    <property type="entry name" value="P-loop containing nucleoside triphosphate hydrolases"/>
    <property type="match status" value="1"/>
</dbReference>